<feature type="chain" id="PRO_0000274270" description="SAGA-associated factor 29">
    <location>
        <begin position="1"/>
        <end position="293"/>
    </location>
</feature>
<feature type="domain" description="SGF29 C-terminal" evidence="5">
    <location>
        <begin position="152"/>
        <end position="293"/>
    </location>
</feature>
<feature type="region of interest" description="Histone H3K4me3 N-terminus binding" evidence="5">
    <location>
        <begin position="194"/>
        <end position="196"/>
    </location>
</feature>
<feature type="region of interest" description="Histone H3K4me3 N-terminus binding" evidence="5">
    <location>
        <begin position="240"/>
        <end position="243"/>
    </location>
</feature>
<feature type="region of interest" description="Histone H3K4me3 binding" evidence="5">
    <location>
        <begin position="264"/>
        <end position="266"/>
    </location>
</feature>
<feature type="coiled-coil region" evidence="4">
    <location>
        <begin position="12"/>
        <end position="88"/>
    </location>
</feature>
<feature type="site" description="Histone H3K4me3 binding" evidence="5">
    <location>
        <position position="238"/>
    </location>
</feature>
<feature type="site" description="Histone H3K4me3 binding" evidence="5">
    <location>
        <position position="245"/>
    </location>
</feature>
<gene>
    <name evidence="2" type="primary">SGF29</name>
    <name type="synonym">CCDC101</name>
    <name type="ORF">RCJMB04_7p7</name>
</gene>
<accession>Q5ZL38</accession>
<keyword id="KW-0156">Chromatin regulator</keyword>
<keyword id="KW-0175">Coiled coil</keyword>
<keyword id="KW-0539">Nucleus</keyword>
<keyword id="KW-1185">Reference proteome</keyword>
<keyword id="KW-0804">Transcription</keyword>
<keyword id="KW-0805">Transcription regulation</keyword>
<reference key="1">
    <citation type="journal article" date="2005" name="Genome Biol.">
        <title>Full-length cDNAs from chicken bursal lymphocytes to facilitate gene function analysis.</title>
        <authorList>
            <person name="Caldwell R.B."/>
            <person name="Kierzek A.M."/>
            <person name="Arakawa H."/>
            <person name="Bezzubov Y."/>
            <person name="Zaim J."/>
            <person name="Fiedler P."/>
            <person name="Kutter S."/>
            <person name="Blagodatski A."/>
            <person name="Kostovska D."/>
            <person name="Koter M."/>
            <person name="Plachy J."/>
            <person name="Carninci P."/>
            <person name="Hayashizaki Y."/>
            <person name="Buerstedde J.-M."/>
        </authorList>
    </citation>
    <scope>NUCLEOTIDE SEQUENCE [LARGE SCALE MRNA]</scope>
    <source>
        <strain>CB</strain>
        <tissue>Bursa of Fabricius</tissue>
    </source>
</reference>
<dbReference type="EMBL" id="AJ719896">
    <property type="protein sequence ID" value="CAG31555.1"/>
    <property type="molecule type" value="mRNA"/>
</dbReference>
<dbReference type="RefSeq" id="NP_001026469.1">
    <property type="nucleotide sequence ID" value="NM_001031298.2"/>
</dbReference>
<dbReference type="SMR" id="Q5ZL38"/>
<dbReference type="FunCoup" id="Q5ZL38">
    <property type="interactions" value="363"/>
</dbReference>
<dbReference type="STRING" id="9031.ENSGALP00000037055"/>
<dbReference type="PaxDb" id="9031-ENSGALP00000037055"/>
<dbReference type="GeneID" id="424726"/>
<dbReference type="KEGG" id="gga:424726"/>
<dbReference type="CTD" id="112869"/>
<dbReference type="VEuPathDB" id="HostDB:geneid_424726"/>
<dbReference type="eggNOG" id="KOG3038">
    <property type="taxonomic scope" value="Eukaryota"/>
</dbReference>
<dbReference type="HOGENOM" id="CLU_056816_0_0_1"/>
<dbReference type="InParanoid" id="Q5ZL38"/>
<dbReference type="OrthoDB" id="10265994at2759"/>
<dbReference type="PhylomeDB" id="Q5ZL38"/>
<dbReference type="Reactome" id="R-GGA-9772755">
    <property type="pathway name" value="Formation of WDR5-containing histone-modifying complexes"/>
</dbReference>
<dbReference type="PRO" id="PR:Q5ZL38"/>
<dbReference type="Proteomes" id="UP000000539">
    <property type="component" value="Chromosome 8"/>
</dbReference>
<dbReference type="Bgee" id="ENSGALG00000020590">
    <property type="expression patterns" value="Expressed in lung and 12 other cell types or tissues"/>
</dbReference>
<dbReference type="GO" id="GO:0140672">
    <property type="term" value="C:ATAC complex"/>
    <property type="evidence" value="ECO:0000250"/>
    <property type="project" value="UniProtKB"/>
</dbReference>
<dbReference type="GO" id="GO:0005634">
    <property type="term" value="C:nucleus"/>
    <property type="evidence" value="ECO:0007669"/>
    <property type="project" value="UniProtKB-SubCell"/>
</dbReference>
<dbReference type="GO" id="GO:0000124">
    <property type="term" value="C:SAGA complex"/>
    <property type="evidence" value="ECO:0000318"/>
    <property type="project" value="GO_Central"/>
</dbReference>
<dbReference type="GO" id="GO:0070461">
    <property type="term" value="C:SAGA-type complex"/>
    <property type="evidence" value="ECO:0000250"/>
    <property type="project" value="UniProtKB"/>
</dbReference>
<dbReference type="GO" id="GO:0140003">
    <property type="term" value="F:histone H3K36me3 reader activity"/>
    <property type="evidence" value="ECO:0000250"/>
    <property type="project" value="UniProtKB"/>
</dbReference>
<dbReference type="GO" id="GO:0035064">
    <property type="term" value="F:methylated histone binding"/>
    <property type="evidence" value="ECO:0000318"/>
    <property type="project" value="GO_Central"/>
</dbReference>
<dbReference type="GO" id="GO:0140034">
    <property type="term" value="F:methylation-dependent protein binding"/>
    <property type="evidence" value="ECO:0000250"/>
    <property type="project" value="UniProtKB"/>
</dbReference>
<dbReference type="GO" id="GO:0045815">
    <property type="term" value="P:transcription initiation-coupled chromatin remodeling"/>
    <property type="evidence" value="ECO:0000250"/>
    <property type="project" value="UniProtKB"/>
</dbReference>
<dbReference type="CDD" id="cd20393">
    <property type="entry name" value="Tudor_SGF29_rpt1"/>
    <property type="match status" value="1"/>
</dbReference>
<dbReference type="CDD" id="cd20394">
    <property type="entry name" value="Tudor_SGF29_rpt2"/>
    <property type="match status" value="1"/>
</dbReference>
<dbReference type="FunFam" id="2.30.30.140:FF:000026">
    <property type="entry name" value="SAGA-associated factor 29 homolog"/>
    <property type="match status" value="1"/>
</dbReference>
<dbReference type="FunFam" id="2.30.30.140:FF:000029">
    <property type="entry name" value="SAGA-associated factor 29 homolog"/>
    <property type="match status" value="1"/>
</dbReference>
<dbReference type="Gene3D" id="2.30.30.140">
    <property type="match status" value="2"/>
</dbReference>
<dbReference type="InterPro" id="IPR037802">
    <property type="entry name" value="SGF29"/>
</dbReference>
<dbReference type="InterPro" id="IPR010750">
    <property type="entry name" value="SGF29_tudor-like_dom"/>
</dbReference>
<dbReference type="InterPro" id="IPR047288">
    <property type="entry name" value="Tudor_SGF29_rpt1"/>
</dbReference>
<dbReference type="InterPro" id="IPR047287">
    <property type="entry name" value="Tudor_SGF29_rpt2"/>
</dbReference>
<dbReference type="PANTHER" id="PTHR21539">
    <property type="entry name" value="SAGA-ASSOCIATED FACTOR 29"/>
    <property type="match status" value="1"/>
</dbReference>
<dbReference type="PANTHER" id="PTHR21539:SF0">
    <property type="entry name" value="SAGA-ASSOCIATED FACTOR 29"/>
    <property type="match status" value="1"/>
</dbReference>
<dbReference type="Pfam" id="PF07039">
    <property type="entry name" value="SGF29_Tudor"/>
    <property type="match status" value="1"/>
</dbReference>
<dbReference type="PROSITE" id="PS51518">
    <property type="entry name" value="SGF29_C"/>
    <property type="match status" value="1"/>
</dbReference>
<name>SGF29_CHICK</name>
<proteinExistence type="evidence at transcript level"/>
<organism>
    <name type="scientific">Gallus gallus</name>
    <name type="common">Chicken</name>
    <dbReference type="NCBI Taxonomy" id="9031"/>
    <lineage>
        <taxon>Eukaryota</taxon>
        <taxon>Metazoa</taxon>
        <taxon>Chordata</taxon>
        <taxon>Craniata</taxon>
        <taxon>Vertebrata</taxon>
        <taxon>Euteleostomi</taxon>
        <taxon>Archelosauria</taxon>
        <taxon>Archosauria</taxon>
        <taxon>Dinosauria</taxon>
        <taxon>Saurischia</taxon>
        <taxon>Theropoda</taxon>
        <taxon>Coelurosauria</taxon>
        <taxon>Aves</taxon>
        <taxon>Neognathae</taxon>
        <taxon>Galloanserae</taxon>
        <taxon>Galliformes</taxon>
        <taxon>Phasianidae</taxon>
        <taxon>Phasianinae</taxon>
        <taxon>Gallus</taxon>
    </lineage>
</organism>
<protein>
    <recommendedName>
        <fullName evidence="6">SAGA-associated factor 29</fullName>
    </recommendedName>
    <alternativeName>
        <fullName>Coiled-coil domain-containing protein 101</fullName>
    </alternativeName>
    <alternativeName>
        <fullName evidence="2">SAGA complex-associated factor 29</fullName>
    </alternativeName>
</protein>
<sequence>MALVSADSRIAELLAELQRLLGHTQEERSRSEHNLINIQKTHERMQTENKISPYYRTKLRGLYTTAKADAEAECNILRKALDKIAEIKSLLEERRIAAKIAGIYSDAEPPRKTMRRGVLMTLLQQSAMTLPLWIGKPGDKPPPLCGAMPAAGDYVAKPGDKVAARVKAVDGDEQWILAEVVSYSHAANKYEVDDIDEEGKERHTLSRRRVIPLPQWKANPETDPEALFQREQLVLALYPQTTCFYRALIHAPPQRPQDDYSVLFEDTSYADGYSPPLNVAQRYVVACKETKKK</sequence>
<comment type="function">
    <text evidence="2 3">Chromatin reader component of some histone acetyltransferase (HAT) SAGA-type complexes like the TFTC-HAT, ATAC or STAGA complexes (By similarity). SGF29 specifically recognizes and binds methylated 'Lys-4' of histone H3 (H3K4me), with a preference for trimethylated form (H3K4me3) (By similarity). In the SAGA-type complexes, SGF29 is required to recruit complexes to H3K4me (By similarity). Also binds non-histone proteins that are methylated on Lys residues (By similarity).</text>
</comment>
<comment type="subunit">
    <text evidence="1 2">Interacts with dimethylated and trimethylated 'Lys-4' of histone H3 (H3K4me2 and H3K4me3), with a preference for the trimethylated form (H3K4me3). Component of some SAGA-type complexes. Component of the ADA2A-containing complex (ATAC).</text>
</comment>
<comment type="subcellular location">
    <subcellularLocation>
        <location evidence="1">Nucleus</location>
    </subcellularLocation>
</comment>
<comment type="domain">
    <text evidence="5">The SGF29 C-terminal (also named tudor-like) domain mediates binding to methylated 'Lys-4' of histone H3 (H3K4me).</text>
</comment>
<comment type="similarity">
    <text evidence="5">Belongs to the SGF29 family.</text>
</comment>
<evidence type="ECO:0000250" key="1">
    <source>
        <dbReference type="UniProtKB" id="P0C606"/>
    </source>
</evidence>
<evidence type="ECO:0000250" key="2">
    <source>
        <dbReference type="UniProtKB" id="Q96ES7"/>
    </source>
</evidence>
<evidence type="ECO:0000250" key="3">
    <source>
        <dbReference type="UniProtKB" id="Q9DA08"/>
    </source>
</evidence>
<evidence type="ECO:0000255" key="4"/>
<evidence type="ECO:0000255" key="5">
    <source>
        <dbReference type="PROSITE-ProRule" id="PRU00851"/>
    </source>
</evidence>
<evidence type="ECO:0000305" key="6"/>